<feature type="signal peptide" evidence="8">
    <location>
        <begin position="1"/>
        <end position="18"/>
    </location>
</feature>
<feature type="chain" id="PRO_0000024678" description="Procollagen-lysine,2-oxoglutarate 5-dioxygenase 1">
    <location>
        <begin position="19"/>
        <end position="727"/>
    </location>
</feature>
<feature type="domain" description="Fe2OG dioxygenase" evidence="4">
    <location>
        <begin position="636"/>
        <end position="727"/>
    </location>
</feature>
<feature type="active site" evidence="3">
    <location>
        <position position="718"/>
    </location>
</feature>
<feature type="binding site" evidence="17">
    <location>
        <position position="656"/>
    </location>
    <ligand>
        <name>Fe cation</name>
        <dbReference type="ChEBI" id="CHEBI:24875"/>
    </ligand>
</feature>
<feature type="binding site" evidence="17">
    <location>
        <position position="658"/>
    </location>
    <ligand>
        <name>Fe cation</name>
        <dbReference type="ChEBI" id="CHEBI:24875"/>
    </ligand>
</feature>
<feature type="binding site" evidence="17">
    <location>
        <position position="708"/>
    </location>
    <ligand>
        <name>Fe cation</name>
        <dbReference type="ChEBI" id="CHEBI:24875"/>
    </ligand>
</feature>
<feature type="glycosylation site" description="N-linked (GlcNAc...) asparagine" evidence="3">
    <location>
        <position position="163"/>
    </location>
</feature>
<feature type="glycosylation site" description="N-linked (GlcNAc...) asparagine" evidence="16">
    <location>
        <position position="197"/>
    </location>
</feature>
<feature type="glycosylation site" description="N-linked (GlcNAc...) asparagine" evidence="16">
    <location>
        <position position="538"/>
    </location>
</feature>
<feature type="glycosylation site" description="N-linked (GlcNAc...) asparagine" evidence="3">
    <location>
        <position position="686"/>
    </location>
</feature>
<feature type="splice variant" id="VSP_056300" description="In isoform 2." evidence="15">
    <original>E</original>
    <variation>EAPCCQEGLRAGGSGSLHLGRDFTVLAGARGSPSPSVSSIPRFWIPGS</variation>
    <location>
        <position position="25"/>
    </location>
</feature>
<feature type="sequence variant" id="VAR_032754" description="In dbSNP:rs7551068.">
    <original>E</original>
    <variation>D</variation>
    <location>
        <position position="67"/>
    </location>
</feature>
<feature type="sequence variant" id="VAR_032755" description="In dbSNP:rs34878020.">
    <original>A</original>
    <variation>T</variation>
    <location>
        <position position="84"/>
    </location>
</feature>
<feature type="sequence variant" id="VAR_014220" description="In dbSNP:rs7551175." evidence="6 8">
    <original>A</original>
    <variation>T</variation>
    <location>
        <position position="99"/>
    </location>
</feature>
<feature type="sequence variant" id="VAR_032756" description="In dbSNP:rs2273285." evidence="6">
    <original>A</original>
    <variation>S</variation>
    <location>
        <position position="120"/>
    </location>
</feature>
<feature type="sequence variant" id="VAR_035479" description="In a breast cancer sample; somatic mutation; dbSNP:rs1645691361." evidence="11">
    <original>Q</original>
    <variation>H</variation>
    <location>
        <position position="123"/>
    </location>
</feature>
<feature type="sequence variant" id="VAR_009269" description="In EDSKSCL1." evidence="5">
    <location>
        <begin position="367"/>
        <end position="371"/>
    </location>
</feature>
<feature type="sequence variant" id="VAR_023466" description="In EDSKSCL1; loss of enzyme activity." evidence="9">
    <original>W</original>
    <variation>G</variation>
    <location>
        <position position="446"/>
    </location>
</feature>
<feature type="sequence variant" id="VAR_006354" description="In EDSKSCL1; dbSNP:rs797044446." evidence="12">
    <location>
        <position position="532"/>
    </location>
</feature>
<feature type="sequence variant" id="VAR_006355" description="In EDSKSCL1; dbSNP:rs121913553." evidence="14">
    <original>W</original>
    <variation>C</variation>
    <location>
        <position position="612"/>
    </location>
</feature>
<feature type="sequence variant" id="VAR_023467" description="In EDSKSCL1; dbSNP:rs199730384." evidence="10">
    <original>A</original>
    <variation>T</variation>
    <location>
        <position position="667"/>
    </location>
</feature>
<feature type="sequence variant" id="VAR_006356" description="In EDSKSCL1; dbSNP:rs121913551." evidence="12">
    <original>G</original>
    <variation>R</variation>
    <location>
        <position position="678"/>
    </location>
</feature>
<feature type="sequence variant" id="VAR_023468" description="In EDSKSCL1." evidence="10">
    <original>H</original>
    <variation>R</variation>
    <location>
        <position position="706"/>
    </location>
</feature>
<feature type="mutagenesis site" description="Loss of activity." evidence="5">
    <original>C</original>
    <variation>A</variation>
    <location>
        <position position="369"/>
    </location>
</feature>
<feature type="mutagenesis site" description="Loss of enzyme activity." evidence="13">
    <original>H</original>
    <variation>S</variation>
    <location>
        <position position="656"/>
    </location>
</feature>
<feature type="mutagenesis site" description="Loss of enzyme activity." evidence="13">
    <original>D</original>
    <variation>A</variation>
    <location>
        <position position="658"/>
    </location>
</feature>
<feature type="mutagenesis site" description="Loss of enzyme activity." evidence="13">
    <original>H</original>
    <variation>S</variation>
    <location>
        <position position="706"/>
    </location>
</feature>
<feature type="mutagenesis site" description="Loss of enzyme activity." evidence="13">
    <original>H</original>
    <variation>S</variation>
    <location>
        <position position="708"/>
    </location>
</feature>
<name>PLOD1_HUMAN</name>
<dbReference type="EC" id="1.14.11.4" evidence="5 9 13"/>
<dbReference type="EMBL" id="L06419">
    <property type="protein sequence ID" value="AAA60116.1"/>
    <property type="molecule type" value="mRNA"/>
</dbReference>
<dbReference type="EMBL" id="AF490527">
    <property type="protein sequence ID" value="AAM12752.1"/>
    <property type="molecule type" value="Genomic_DNA"/>
</dbReference>
<dbReference type="EMBL" id="AF490514">
    <property type="protein sequence ID" value="AAM12752.1"/>
    <property type="status" value="JOINED"/>
    <property type="molecule type" value="Genomic_DNA"/>
</dbReference>
<dbReference type="EMBL" id="AF490515">
    <property type="protein sequence ID" value="AAM12752.1"/>
    <property type="status" value="JOINED"/>
    <property type="molecule type" value="Genomic_DNA"/>
</dbReference>
<dbReference type="EMBL" id="AF490516">
    <property type="protein sequence ID" value="AAM12752.1"/>
    <property type="status" value="JOINED"/>
    <property type="molecule type" value="Genomic_DNA"/>
</dbReference>
<dbReference type="EMBL" id="AF490517">
    <property type="protein sequence ID" value="AAM12752.1"/>
    <property type="status" value="JOINED"/>
    <property type="molecule type" value="Genomic_DNA"/>
</dbReference>
<dbReference type="EMBL" id="AF490518">
    <property type="protein sequence ID" value="AAM12752.1"/>
    <property type="status" value="JOINED"/>
    <property type="molecule type" value="Genomic_DNA"/>
</dbReference>
<dbReference type="EMBL" id="AF490519">
    <property type="protein sequence ID" value="AAM12752.1"/>
    <property type="status" value="JOINED"/>
    <property type="molecule type" value="Genomic_DNA"/>
</dbReference>
<dbReference type="EMBL" id="AF490520">
    <property type="protein sequence ID" value="AAM12752.1"/>
    <property type="status" value="JOINED"/>
    <property type="molecule type" value="Genomic_DNA"/>
</dbReference>
<dbReference type="EMBL" id="AF490521">
    <property type="protein sequence ID" value="AAM12752.1"/>
    <property type="status" value="JOINED"/>
    <property type="molecule type" value="Genomic_DNA"/>
</dbReference>
<dbReference type="EMBL" id="AF490522">
    <property type="protein sequence ID" value="AAM12752.1"/>
    <property type="status" value="JOINED"/>
    <property type="molecule type" value="Genomic_DNA"/>
</dbReference>
<dbReference type="EMBL" id="AF490523">
    <property type="protein sequence ID" value="AAM12752.1"/>
    <property type="status" value="JOINED"/>
    <property type="molecule type" value="Genomic_DNA"/>
</dbReference>
<dbReference type="EMBL" id="AF490524">
    <property type="protein sequence ID" value="AAM12752.1"/>
    <property type="status" value="JOINED"/>
    <property type="molecule type" value="Genomic_DNA"/>
</dbReference>
<dbReference type="EMBL" id="AF490525">
    <property type="protein sequence ID" value="AAM12752.1"/>
    <property type="status" value="JOINED"/>
    <property type="molecule type" value="Genomic_DNA"/>
</dbReference>
<dbReference type="EMBL" id="AF490526">
    <property type="protein sequence ID" value="AAM12752.1"/>
    <property type="status" value="JOINED"/>
    <property type="molecule type" value="Genomic_DNA"/>
</dbReference>
<dbReference type="EMBL" id="AK299150">
    <property type="protein sequence ID" value="BAG61199.1"/>
    <property type="molecule type" value="mRNA"/>
</dbReference>
<dbReference type="EMBL" id="AK316285">
    <property type="protein sequence ID" value="BAH14656.1"/>
    <property type="molecule type" value="mRNA"/>
</dbReference>
<dbReference type="EMBL" id="AL096840">
    <property type="status" value="NOT_ANNOTATED_CDS"/>
    <property type="molecule type" value="Genomic_DNA"/>
</dbReference>
<dbReference type="EMBL" id="BC016657">
    <property type="protein sequence ID" value="AAH16657.1"/>
    <property type="molecule type" value="mRNA"/>
</dbReference>
<dbReference type="CCDS" id="CCDS142.1">
    <molecule id="Q02809-1"/>
</dbReference>
<dbReference type="PIR" id="A38206">
    <property type="entry name" value="A38206"/>
</dbReference>
<dbReference type="RefSeq" id="NP_000293.2">
    <molecule id="Q02809-1"/>
    <property type="nucleotide sequence ID" value="NM_000302.3"/>
</dbReference>
<dbReference type="RefSeq" id="NP_001303249.1">
    <molecule id="Q02809-2"/>
    <property type="nucleotide sequence ID" value="NM_001316320.2"/>
</dbReference>
<dbReference type="SMR" id="Q02809"/>
<dbReference type="BioGRID" id="111366">
    <property type="interactions" value="318"/>
</dbReference>
<dbReference type="FunCoup" id="Q02809">
    <property type="interactions" value="1225"/>
</dbReference>
<dbReference type="IntAct" id="Q02809">
    <property type="interactions" value="120"/>
</dbReference>
<dbReference type="MINT" id="Q02809"/>
<dbReference type="STRING" id="9606.ENSP00000196061"/>
<dbReference type="BindingDB" id="Q02809"/>
<dbReference type="ChEMBL" id="CHEMBL5465300"/>
<dbReference type="DrugBank" id="DB00126">
    <property type="generic name" value="Ascorbic acid"/>
</dbReference>
<dbReference type="DrugCentral" id="Q02809"/>
<dbReference type="GlyConnect" id="1633">
    <property type="glycosylation" value="21 N-Linked glycans (3 sites)"/>
</dbReference>
<dbReference type="GlyCosmos" id="Q02809">
    <property type="glycosylation" value="4 sites, 21 glycans"/>
</dbReference>
<dbReference type="GlyGen" id="Q02809">
    <property type="glycosylation" value="7 sites, 54 N-linked glycans (4 sites), 2 O-linked glycans (3 sites)"/>
</dbReference>
<dbReference type="iPTMnet" id="Q02809"/>
<dbReference type="PhosphoSitePlus" id="Q02809"/>
<dbReference type="SwissPalm" id="Q02809"/>
<dbReference type="BioMuta" id="PLOD1"/>
<dbReference type="DMDM" id="78099790"/>
<dbReference type="CPTAC" id="CPTAC-1500"/>
<dbReference type="CPTAC" id="CPTAC-2232"/>
<dbReference type="CPTAC" id="CPTAC-566"/>
<dbReference type="CPTAC" id="CPTAC-567"/>
<dbReference type="jPOST" id="Q02809"/>
<dbReference type="MassIVE" id="Q02809"/>
<dbReference type="PaxDb" id="9606-ENSP00000196061"/>
<dbReference type="PeptideAtlas" id="Q02809"/>
<dbReference type="ProteomicsDB" id="4934"/>
<dbReference type="ProteomicsDB" id="58126">
    <molecule id="Q02809-1"/>
</dbReference>
<dbReference type="Pumba" id="Q02809"/>
<dbReference type="Antibodypedia" id="28331">
    <property type="antibodies" value="146 antibodies from 26 providers"/>
</dbReference>
<dbReference type="DNASU" id="5351"/>
<dbReference type="Ensembl" id="ENST00000196061.5">
    <molecule id="Q02809-1"/>
    <property type="protein sequence ID" value="ENSP00000196061.4"/>
    <property type="gene ID" value="ENSG00000083444.17"/>
</dbReference>
<dbReference type="GeneID" id="5351"/>
<dbReference type="KEGG" id="hsa:5351"/>
<dbReference type="MANE-Select" id="ENST00000196061.5">
    <property type="protein sequence ID" value="ENSP00000196061.4"/>
    <property type="RefSeq nucleotide sequence ID" value="NM_000302.4"/>
    <property type="RefSeq protein sequence ID" value="NP_000293.2"/>
</dbReference>
<dbReference type="UCSC" id="uc001atm.4">
    <molecule id="Q02809-1"/>
    <property type="organism name" value="human"/>
</dbReference>
<dbReference type="AGR" id="HGNC:9081"/>
<dbReference type="CTD" id="5351"/>
<dbReference type="DisGeNET" id="5351"/>
<dbReference type="GeneCards" id="PLOD1"/>
<dbReference type="GeneReviews" id="PLOD1"/>
<dbReference type="HGNC" id="HGNC:9081">
    <property type="gene designation" value="PLOD1"/>
</dbReference>
<dbReference type="HPA" id="ENSG00000083444">
    <property type="expression patterns" value="Low tissue specificity"/>
</dbReference>
<dbReference type="MalaCards" id="PLOD1"/>
<dbReference type="MIM" id="153454">
    <property type="type" value="gene"/>
</dbReference>
<dbReference type="MIM" id="225400">
    <property type="type" value="phenotype"/>
</dbReference>
<dbReference type="neXtProt" id="NX_Q02809"/>
<dbReference type="OpenTargets" id="ENSG00000083444"/>
<dbReference type="Orphanet" id="1900">
    <property type="disease" value="Kyphoscoliotic Ehlers-Danlos syndrome due to lysyl hydroxylase 1 deficiency"/>
</dbReference>
<dbReference type="PharmGKB" id="PA33411"/>
<dbReference type="VEuPathDB" id="HostDB:ENSG00000083444"/>
<dbReference type="eggNOG" id="KOG1971">
    <property type="taxonomic scope" value="Eukaryota"/>
</dbReference>
<dbReference type="GeneTree" id="ENSGT01030000234558"/>
<dbReference type="HOGENOM" id="CLU_022320_1_0_1"/>
<dbReference type="InParanoid" id="Q02809"/>
<dbReference type="OMA" id="TDVACNH"/>
<dbReference type="OrthoDB" id="69177at2759"/>
<dbReference type="PAN-GO" id="Q02809">
    <property type="GO annotations" value="3 GO annotations based on evolutionary models"/>
</dbReference>
<dbReference type="PhylomeDB" id="Q02809"/>
<dbReference type="TreeFam" id="TF313826"/>
<dbReference type="BioCyc" id="MetaCyc:HS01440-MONOMER"/>
<dbReference type="PathwayCommons" id="Q02809"/>
<dbReference type="Reactome" id="R-HSA-1650814">
    <property type="pathway name" value="Collagen biosynthesis and modifying enzymes"/>
</dbReference>
<dbReference type="SignaLink" id="Q02809"/>
<dbReference type="SIGNOR" id="Q02809"/>
<dbReference type="BioGRID-ORCS" id="5351">
    <property type="hits" value="20 hits in 1159 CRISPR screens"/>
</dbReference>
<dbReference type="ChiTaRS" id="PLOD1">
    <property type="organism name" value="human"/>
</dbReference>
<dbReference type="GenomeRNAi" id="5351"/>
<dbReference type="Pharos" id="Q02809">
    <property type="development level" value="Tbio"/>
</dbReference>
<dbReference type="PRO" id="PR:Q02809"/>
<dbReference type="Proteomes" id="UP000005640">
    <property type="component" value="Chromosome 1"/>
</dbReference>
<dbReference type="RNAct" id="Q02809">
    <property type="molecule type" value="protein"/>
</dbReference>
<dbReference type="Bgee" id="ENSG00000083444">
    <property type="expression patterns" value="Expressed in stromal cell of endometrium and 200 other cell types or tissues"/>
</dbReference>
<dbReference type="ExpressionAtlas" id="Q02809">
    <property type="expression patterns" value="baseline and differential"/>
</dbReference>
<dbReference type="GO" id="GO:1902494">
    <property type="term" value="C:catalytic complex"/>
    <property type="evidence" value="ECO:0007669"/>
    <property type="project" value="Ensembl"/>
</dbReference>
<dbReference type="GO" id="GO:0062023">
    <property type="term" value="C:collagen-containing extracellular matrix"/>
    <property type="evidence" value="ECO:0000318"/>
    <property type="project" value="GO_Central"/>
</dbReference>
<dbReference type="GO" id="GO:0005783">
    <property type="term" value="C:endoplasmic reticulum"/>
    <property type="evidence" value="ECO:0000318"/>
    <property type="project" value="GO_Central"/>
</dbReference>
<dbReference type="GO" id="GO:0005789">
    <property type="term" value="C:endoplasmic reticulum membrane"/>
    <property type="evidence" value="ECO:0000304"/>
    <property type="project" value="Reactome"/>
</dbReference>
<dbReference type="GO" id="GO:0070062">
    <property type="term" value="C:extracellular exosome"/>
    <property type="evidence" value="ECO:0007005"/>
    <property type="project" value="UniProtKB"/>
</dbReference>
<dbReference type="GO" id="GO:0005615">
    <property type="term" value="C:extracellular space"/>
    <property type="evidence" value="ECO:0000318"/>
    <property type="project" value="GO_Central"/>
</dbReference>
<dbReference type="GO" id="GO:0005794">
    <property type="term" value="C:Golgi apparatus"/>
    <property type="evidence" value="ECO:0000318"/>
    <property type="project" value="GO_Central"/>
</dbReference>
<dbReference type="GO" id="GO:0030867">
    <property type="term" value="C:rough endoplasmic reticulum membrane"/>
    <property type="evidence" value="ECO:0007669"/>
    <property type="project" value="UniProtKB-SubCell"/>
</dbReference>
<dbReference type="GO" id="GO:0005506">
    <property type="term" value="F:iron ion binding"/>
    <property type="evidence" value="ECO:0007669"/>
    <property type="project" value="InterPro"/>
</dbReference>
<dbReference type="GO" id="GO:0031418">
    <property type="term" value="F:L-ascorbic acid binding"/>
    <property type="evidence" value="ECO:0007669"/>
    <property type="project" value="UniProtKB-KW"/>
</dbReference>
<dbReference type="GO" id="GO:0008475">
    <property type="term" value="F:procollagen-lysine 5-dioxygenase activity"/>
    <property type="evidence" value="ECO:0000314"/>
    <property type="project" value="CAFA"/>
</dbReference>
<dbReference type="GO" id="GO:0030199">
    <property type="term" value="P:collagen fibril organization"/>
    <property type="evidence" value="ECO:0000318"/>
    <property type="project" value="GO_Central"/>
</dbReference>
<dbReference type="GO" id="GO:0008544">
    <property type="term" value="P:epidermis development"/>
    <property type="evidence" value="ECO:0000315"/>
    <property type="project" value="UniProtKB"/>
</dbReference>
<dbReference type="GO" id="GO:0017185">
    <property type="term" value="P:peptidyl-lysine hydroxylation"/>
    <property type="evidence" value="ECO:0000314"/>
    <property type="project" value="UniProtKB"/>
</dbReference>
<dbReference type="GO" id="GO:0001666">
    <property type="term" value="P:response to hypoxia"/>
    <property type="evidence" value="ECO:0000270"/>
    <property type="project" value="UniProtKB"/>
</dbReference>
<dbReference type="CDD" id="cd23004">
    <property type="entry name" value="GT_LH1"/>
    <property type="match status" value="1"/>
</dbReference>
<dbReference type="FunFam" id="2.60.120.620:FF:000004">
    <property type="entry name" value="Procollagen-lysine,2-oxoglutarate 5-dioxygenase 2"/>
    <property type="match status" value="1"/>
</dbReference>
<dbReference type="Gene3D" id="2.60.120.620">
    <property type="entry name" value="q2cbj1_9rhob like domain"/>
    <property type="match status" value="1"/>
</dbReference>
<dbReference type="InterPro" id="IPR050757">
    <property type="entry name" value="Collagen_mod_GT25"/>
</dbReference>
<dbReference type="InterPro" id="IPR044861">
    <property type="entry name" value="IPNS-like_FE2OG_OXY"/>
</dbReference>
<dbReference type="InterPro" id="IPR029044">
    <property type="entry name" value="Nucleotide-diphossugar_trans"/>
</dbReference>
<dbReference type="InterPro" id="IPR005123">
    <property type="entry name" value="Oxoglu/Fe-dep_dioxygenase_dom"/>
</dbReference>
<dbReference type="InterPro" id="IPR006620">
    <property type="entry name" value="Pro_4_hyd_alph"/>
</dbReference>
<dbReference type="InterPro" id="IPR001006">
    <property type="entry name" value="Procol_lys_dOase"/>
</dbReference>
<dbReference type="PANTHER" id="PTHR10730:SF5">
    <property type="entry name" value="PROCOLLAGEN-LYSINE,2-OXOGLUTARATE 5-DIOXYGENASE 1"/>
    <property type="match status" value="1"/>
</dbReference>
<dbReference type="PANTHER" id="PTHR10730">
    <property type="entry name" value="PROCOLLAGEN-LYSINE,2-OXOGLUTARATE 5-DIOXYGENASE/GLYCOSYLTRANSFERASE 25 FAMILY MEMBER"/>
    <property type="match status" value="1"/>
</dbReference>
<dbReference type="Pfam" id="PF03171">
    <property type="entry name" value="2OG-FeII_Oxy"/>
    <property type="match status" value="1"/>
</dbReference>
<dbReference type="Pfam" id="PF25342">
    <property type="entry name" value="GT_PLOD"/>
    <property type="match status" value="1"/>
</dbReference>
<dbReference type="Pfam" id="PF25238">
    <property type="entry name" value="OGFOD2-like"/>
    <property type="match status" value="1"/>
</dbReference>
<dbReference type="SMART" id="SM00702">
    <property type="entry name" value="P4Hc"/>
    <property type="match status" value="1"/>
</dbReference>
<dbReference type="SUPFAM" id="SSF53448">
    <property type="entry name" value="Nucleotide-diphospho-sugar transferases"/>
    <property type="match status" value="1"/>
</dbReference>
<dbReference type="PROSITE" id="PS51471">
    <property type="entry name" value="FE2OG_OXY"/>
    <property type="match status" value="1"/>
</dbReference>
<dbReference type="PROSITE" id="PS01325">
    <property type="entry name" value="LYS_HYDROXYLASE"/>
    <property type="match status" value="1"/>
</dbReference>
<proteinExistence type="evidence at protein level"/>
<sequence>MRPLLLLALLGWLLLAEAKGDAKPEDNLLVLTVATKETEGFRRFKRSAQFFNYKIQALGLGEDWNVEKGTSAGGGQKVRLLKKALEKHADKEDLVILFADSYDVLFASGPRELLKKFRQARSQVVFSAEELIYPDRRLETKYPVVSDGKRFLGSGGFIGYAPNLSKLVAEWEGQDSDSDQLFYTKIFLDPEKREQINITLDHRCRIFQNLDGALDEVVLKFEMGHVRARNLAYDTLPVLIHGNGPTKLQLNYLGNYIPRFWTFETGCTVCDEGLRSLKGIGDEALPTVLVGVFIEQPTPFVSLFFQRLLRLHYPQKHMRLFIHNHEQHHKAQVEEFLAQHGSEYQSVKLVGPEVRMANADARNMGADLCRQDRSCTYYFSVDADVALTEPNSLRLLIQQNKNVIAPLMTRHGRLWSNFWGALSADGYYARSEDYVDIVQGRRVGVWNVPYISNIYLIKGSALRGELQSSDLFHHSKLDPDMAFCANIRQQDVFMFLTNRHTLGHLLSLDSYRTTHLHNDLWEVFSNPEDWKEKYIHQNYTKALAGKLVETPCPDVYWFPIFTEVACDELVEEMEHFGQWSLGNNKDNRIQGGYENVPTIDIHMNQIGFEREWHKFLLEYIAPMTEKLYPGYYTRAQFDLAFVVRYKPDEQPSLMPHHDASTFTINIALNRVGVDYEGGGCRFLRYNCSIRAPRKGWTLMHPGRLTHYHEGLPTTRGTRYIAVSFVDP</sequence>
<accession>Q02809</accession>
<accession>B4DR87</accession>
<accession>Q96AV9</accession>
<accession>Q9H132</accession>
<protein>
    <recommendedName>
        <fullName>Procollagen-lysine,2-oxoglutarate 5-dioxygenase 1</fullName>
        <ecNumber evidence="5 9 13">1.14.11.4</ecNumber>
    </recommendedName>
    <alternativeName>
        <fullName>Lysyl hydroxylase 1</fullName>
        <shortName>LH1</shortName>
    </alternativeName>
</protein>
<organism>
    <name type="scientific">Homo sapiens</name>
    <name type="common">Human</name>
    <dbReference type="NCBI Taxonomy" id="9606"/>
    <lineage>
        <taxon>Eukaryota</taxon>
        <taxon>Metazoa</taxon>
        <taxon>Chordata</taxon>
        <taxon>Craniata</taxon>
        <taxon>Vertebrata</taxon>
        <taxon>Euteleostomi</taxon>
        <taxon>Mammalia</taxon>
        <taxon>Eutheria</taxon>
        <taxon>Euarchontoglires</taxon>
        <taxon>Primates</taxon>
        <taxon>Haplorrhini</taxon>
        <taxon>Catarrhini</taxon>
        <taxon>Hominidae</taxon>
        <taxon>Homo</taxon>
    </lineage>
</organism>
<gene>
    <name type="primary">PLOD1</name>
    <name type="synonym">LLH</name>
    <name type="synonym">PLOD</name>
</gene>
<evidence type="ECO:0000250" key="1">
    <source>
        <dbReference type="UniProtKB" id="P24802"/>
    </source>
</evidence>
<evidence type="ECO:0000250" key="2">
    <source>
        <dbReference type="UniProtKB" id="Q9R0E2"/>
    </source>
</evidence>
<evidence type="ECO:0000255" key="3"/>
<evidence type="ECO:0000255" key="4">
    <source>
        <dbReference type="PROSITE-ProRule" id="PRU00805"/>
    </source>
</evidence>
<evidence type="ECO:0000269" key="5">
    <source>
    </source>
</evidence>
<evidence type="ECO:0000269" key="6">
    <source>
    </source>
</evidence>
<evidence type="ECO:0000269" key="7">
    <source>
    </source>
</evidence>
<evidence type="ECO:0000269" key="8">
    <source>
    </source>
</evidence>
<evidence type="ECO:0000269" key="9">
    <source>
    </source>
</evidence>
<evidence type="ECO:0000269" key="10">
    <source>
    </source>
</evidence>
<evidence type="ECO:0000269" key="11">
    <source>
    </source>
</evidence>
<evidence type="ECO:0000269" key="12">
    <source>
    </source>
</evidence>
<evidence type="ECO:0000269" key="13">
    <source>
    </source>
</evidence>
<evidence type="ECO:0000269" key="14">
    <source>
    </source>
</evidence>
<evidence type="ECO:0000303" key="15">
    <source>
    </source>
</evidence>
<evidence type="ECO:0000305" key="16"/>
<evidence type="ECO:0000305" key="17">
    <source>
    </source>
</evidence>
<keyword id="KW-0025">Alternative splicing</keyword>
<keyword id="KW-0223">Dioxygenase</keyword>
<keyword id="KW-0903">Direct protein sequencing</keyword>
<keyword id="KW-0225">Disease variant</keyword>
<keyword id="KW-0248">Ehlers-Danlos syndrome</keyword>
<keyword id="KW-0256">Endoplasmic reticulum</keyword>
<keyword id="KW-0325">Glycoprotein</keyword>
<keyword id="KW-0408">Iron</keyword>
<keyword id="KW-0472">Membrane</keyword>
<keyword id="KW-0479">Metal-binding</keyword>
<keyword id="KW-0560">Oxidoreductase</keyword>
<keyword id="KW-1267">Proteomics identification</keyword>
<keyword id="KW-1185">Reference proteome</keyword>
<keyword id="KW-0732">Signal</keyword>
<keyword id="KW-0847">Vitamin C</keyword>
<comment type="function">
    <text evidence="2 5 9 13 16">Part of a complex composed of PLOD1, P3H3 and P3H4 that catalyzes hydroxylation of lysine residues in collagen alpha chains and is required for normal assembly and cross-linkling of collagen fibrils (By similarity). Forms hydroxylysine residues in -Xaa-Lys-Gly- sequences in collagens (PubMed:10686424, PubMed:15854030, PubMed:8621606). These hydroxylysines serve as sites of attachment for carbohydrate units and are essential for the stability of the intermolecular collagen cross-links (Probable).</text>
</comment>
<comment type="catalytic activity">
    <reaction evidence="5 9 13">
        <text>L-lysyl-[collagen] + 2-oxoglutarate + O2 = (5R)-5-hydroxy-L-lysyl-[collagen] + succinate + CO2</text>
        <dbReference type="Rhea" id="RHEA:16569"/>
        <dbReference type="Rhea" id="RHEA-COMP:12751"/>
        <dbReference type="Rhea" id="RHEA-COMP:12752"/>
        <dbReference type="ChEBI" id="CHEBI:15379"/>
        <dbReference type="ChEBI" id="CHEBI:16526"/>
        <dbReference type="ChEBI" id="CHEBI:16810"/>
        <dbReference type="ChEBI" id="CHEBI:29969"/>
        <dbReference type="ChEBI" id="CHEBI:30031"/>
        <dbReference type="ChEBI" id="CHEBI:133442"/>
        <dbReference type="EC" id="1.14.11.4"/>
    </reaction>
</comment>
<comment type="cofactor">
    <cofactor evidence="13">
        <name>Fe(2+)</name>
        <dbReference type="ChEBI" id="CHEBI:29033"/>
    </cofactor>
</comment>
<comment type="cofactor">
    <cofactor evidence="13">
        <name>L-ascorbate</name>
        <dbReference type="ChEBI" id="CHEBI:38290"/>
    </cofactor>
</comment>
<comment type="subunit">
    <text evidence="1 2">Homodimer (By similarity). Identified in a complex with P3H3 and P3H4 (By similarity).</text>
</comment>
<comment type="interaction">
    <interactant intactId="EBI-357174">
        <id>Q02809</id>
    </interactant>
    <interactant intactId="EBI-352823">
        <id>P55795</id>
        <label>HNRNPH2</label>
    </interactant>
    <organismsDiffer>false</organismsDiffer>
    <experiments>5</experiments>
</comment>
<comment type="subcellular location">
    <subcellularLocation>
        <location>Rough endoplasmic reticulum membrane</location>
        <topology>Peripheral membrane protein</topology>
        <orientation>Lumenal side</orientation>
    </subcellularLocation>
</comment>
<comment type="alternative products">
    <event type="alternative splicing"/>
    <isoform>
        <id>Q02809-1</id>
        <name>1</name>
        <sequence type="displayed"/>
    </isoform>
    <isoform>
        <id>Q02809-2</id>
        <name>2</name>
        <sequence type="described" ref="VSP_056300"/>
    </isoform>
</comment>
<comment type="disease" evidence="5 7 9 10 12 14">
    <disease id="DI-00440">
        <name>Ehlers-Danlos syndrome, kyphoscoliotic type, 1</name>
        <acronym>EDSKSCL1</acronym>
        <description>A form of Ehlers-Danlos syndrome, a group of connective tissue disorders characterized by skin hyperextensibility, articular hypermobility, and tissue fragility. EDSKSCL1 is an autosomal recessive form characterized by severe muscle hypotonia at birth, generalized joint laxity, scoliosis at birth, and scleral fragility and rupture of the ocular globe.</description>
        <dbReference type="MIM" id="225400"/>
    </disease>
    <text>The disease is caused by variants affecting the gene represented in this entry.</text>
</comment>
<reference key="1">
    <citation type="journal article" date="1992" name="Genomics">
        <title>Cloning of human lysyl hydroxylase: complete cDNA-derived amino acid sequence and assignment of the gene (PLOD) to chromosome 1p36.3-p36.2.</title>
        <authorList>
            <person name="Hautala T."/>
            <person name="Byers M.G."/>
            <person name="Eddy R.L."/>
            <person name="Shows T.B."/>
            <person name="Kivirikko K.I."/>
            <person name="Myllylae R."/>
        </authorList>
    </citation>
    <scope>NUCLEOTIDE SEQUENCE [MRNA] (ISOFORM 1)</scope>
    <scope>PROTEIN SEQUENCE OF 19-28 AND 332-34</scope>
    <scope>VARIANT THR-99</scope>
    <source>
        <tissue>Placenta</tissue>
    </source>
</reference>
<reference key="2">
    <citation type="journal article" date="1994" name="Genomics">
        <title>Structure and expression of the human lysyl hydroxylase gene (PLOD): introns 9 and 16 contain Alu sequences at the sites of recombination in Ehlers-Danlos syndrome type VI patients.</title>
        <authorList>
            <person name="Heikkinen J."/>
            <person name="Hautala T."/>
            <person name="Kivirikko K.I."/>
            <person name="Myllylae R."/>
        </authorList>
    </citation>
    <scope>NUCLEOTIDE SEQUENCE [GENOMIC DNA]</scope>
</reference>
<reference key="3">
    <citation type="journal article" date="2004" name="Nat. Genet.">
        <title>Complete sequencing and characterization of 21,243 full-length human cDNAs.</title>
        <authorList>
            <person name="Ota T."/>
            <person name="Suzuki Y."/>
            <person name="Nishikawa T."/>
            <person name="Otsuki T."/>
            <person name="Sugiyama T."/>
            <person name="Irie R."/>
            <person name="Wakamatsu A."/>
            <person name="Hayashi K."/>
            <person name="Sato H."/>
            <person name="Nagai K."/>
            <person name="Kimura K."/>
            <person name="Makita H."/>
            <person name="Sekine M."/>
            <person name="Obayashi M."/>
            <person name="Nishi T."/>
            <person name="Shibahara T."/>
            <person name="Tanaka T."/>
            <person name="Ishii S."/>
            <person name="Yamamoto J."/>
            <person name="Saito K."/>
            <person name="Kawai Y."/>
            <person name="Isono Y."/>
            <person name="Nakamura Y."/>
            <person name="Nagahari K."/>
            <person name="Murakami K."/>
            <person name="Yasuda T."/>
            <person name="Iwayanagi T."/>
            <person name="Wagatsuma M."/>
            <person name="Shiratori A."/>
            <person name="Sudo H."/>
            <person name="Hosoiri T."/>
            <person name="Kaku Y."/>
            <person name="Kodaira H."/>
            <person name="Kondo H."/>
            <person name="Sugawara M."/>
            <person name="Takahashi M."/>
            <person name="Kanda K."/>
            <person name="Yokoi T."/>
            <person name="Furuya T."/>
            <person name="Kikkawa E."/>
            <person name="Omura Y."/>
            <person name="Abe K."/>
            <person name="Kamihara K."/>
            <person name="Katsuta N."/>
            <person name="Sato K."/>
            <person name="Tanikawa M."/>
            <person name="Yamazaki M."/>
            <person name="Ninomiya K."/>
            <person name="Ishibashi T."/>
            <person name="Yamashita H."/>
            <person name="Murakawa K."/>
            <person name="Fujimori K."/>
            <person name="Tanai H."/>
            <person name="Kimata M."/>
            <person name="Watanabe M."/>
            <person name="Hiraoka S."/>
            <person name="Chiba Y."/>
            <person name="Ishida S."/>
            <person name="Ono Y."/>
            <person name="Takiguchi S."/>
            <person name="Watanabe S."/>
            <person name="Yosida M."/>
            <person name="Hotuta T."/>
            <person name="Kusano J."/>
            <person name="Kanehori K."/>
            <person name="Takahashi-Fujii A."/>
            <person name="Hara H."/>
            <person name="Tanase T.-O."/>
            <person name="Nomura Y."/>
            <person name="Togiya S."/>
            <person name="Komai F."/>
            <person name="Hara R."/>
            <person name="Takeuchi K."/>
            <person name="Arita M."/>
            <person name="Imose N."/>
            <person name="Musashino K."/>
            <person name="Yuuki H."/>
            <person name="Oshima A."/>
            <person name="Sasaki N."/>
            <person name="Aotsuka S."/>
            <person name="Yoshikawa Y."/>
            <person name="Matsunawa H."/>
            <person name="Ichihara T."/>
            <person name="Shiohata N."/>
            <person name="Sano S."/>
            <person name="Moriya S."/>
            <person name="Momiyama H."/>
            <person name="Satoh N."/>
            <person name="Takami S."/>
            <person name="Terashima Y."/>
            <person name="Suzuki O."/>
            <person name="Nakagawa S."/>
            <person name="Senoh A."/>
            <person name="Mizoguchi H."/>
            <person name="Goto Y."/>
            <person name="Shimizu F."/>
            <person name="Wakebe H."/>
            <person name="Hishigaki H."/>
            <person name="Watanabe T."/>
            <person name="Sugiyama A."/>
            <person name="Takemoto M."/>
            <person name="Kawakami B."/>
            <person name="Yamazaki M."/>
            <person name="Watanabe K."/>
            <person name="Kumagai A."/>
            <person name="Itakura S."/>
            <person name="Fukuzumi Y."/>
            <person name="Fujimori Y."/>
            <person name="Komiyama M."/>
            <person name="Tashiro H."/>
            <person name="Tanigami A."/>
            <person name="Fujiwara T."/>
            <person name="Ono T."/>
            <person name="Yamada K."/>
            <person name="Fujii Y."/>
            <person name="Ozaki K."/>
            <person name="Hirao M."/>
            <person name="Ohmori Y."/>
            <person name="Kawabata A."/>
            <person name="Hikiji T."/>
            <person name="Kobatake N."/>
            <person name="Inagaki H."/>
            <person name="Ikema Y."/>
            <person name="Okamoto S."/>
            <person name="Okitani R."/>
            <person name="Kawakami T."/>
            <person name="Noguchi S."/>
            <person name="Itoh T."/>
            <person name="Shigeta K."/>
            <person name="Senba T."/>
            <person name="Matsumura K."/>
            <person name="Nakajima Y."/>
            <person name="Mizuno T."/>
            <person name="Morinaga M."/>
            <person name="Sasaki M."/>
            <person name="Togashi T."/>
            <person name="Oyama M."/>
            <person name="Hata H."/>
            <person name="Watanabe M."/>
            <person name="Komatsu T."/>
            <person name="Mizushima-Sugano J."/>
            <person name="Satoh T."/>
            <person name="Shirai Y."/>
            <person name="Takahashi Y."/>
            <person name="Nakagawa K."/>
            <person name="Okumura K."/>
            <person name="Nagase T."/>
            <person name="Nomura N."/>
            <person name="Kikuchi H."/>
            <person name="Masuho Y."/>
            <person name="Yamashita R."/>
            <person name="Nakai K."/>
            <person name="Yada T."/>
            <person name="Nakamura Y."/>
            <person name="Ohara O."/>
            <person name="Isogai T."/>
            <person name="Sugano S."/>
        </authorList>
    </citation>
    <scope>NUCLEOTIDE SEQUENCE [LARGE SCALE MRNA] (ISOFORM 2)</scope>
</reference>
<reference key="4">
    <citation type="journal article" date="2006" name="Nature">
        <title>The DNA sequence and biological annotation of human chromosome 1.</title>
        <authorList>
            <person name="Gregory S.G."/>
            <person name="Barlow K.F."/>
            <person name="McLay K.E."/>
            <person name="Kaul R."/>
            <person name="Swarbreck D."/>
            <person name="Dunham A."/>
            <person name="Scott C.E."/>
            <person name="Howe K.L."/>
            <person name="Woodfine K."/>
            <person name="Spencer C.C.A."/>
            <person name="Jones M.C."/>
            <person name="Gillson C."/>
            <person name="Searle S."/>
            <person name="Zhou Y."/>
            <person name="Kokocinski F."/>
            <person name="McDonald L."/>
            <person name="Evans R."/>
            <person name="Phillips K."/>
            <person name="Atkinson A."/>
            <person name="Cooper R."/>
            <person name="Jones C."/>
            <person name="Hall R.E."/>
            <person name="Andrews T.D."/>
            <person name="Lloyd C."/>
            <person name="Ainscough R."/>
            <person name="Almeida J.P."/>
            <person name="Ambrose K.D."/>
            <person name="Anderson F."/>
            <person name="Andrew R.W."/>
            <person name="Ashwell R.I.S."/>
            <person name="Aubin K."/>
            <person name="Babbage A.K."/>
            <person name="Bagguley C.L."/>
            <person name="Bailey J."/>
            <person name="Beasley H."/>
            <person name="Bethel G."/>
            <person name="Bird C.P."/>
            <person name="Bray-Allen S."/>
            <person name="Brown J.Y."/>
            <person name="Brown A.J."/>
            <person name="Buckley D."/>
            <person name="Burton J."/>
            <person name="Bye J."/>
            <person name="Carder C."/>
            <person name="Chapman J.C."/>
            <person name="Clark S.Y."/>
            <person name="Clarke G."/>
            <person name="Clee C."/>
            <person name="Cobley V."/>
            <person name="Collier R.E."/>
            <person name="Corby N."/>
            <person name="Coville G.J."/>
            <person name="Davies J."/>
            <person name="Deadman R."/>
            <person name="Dunn M."/>
            <person name="Earthrowl M."/>
            <person name="Ellington A.G."/>
            <person name="Errington H."/>
            <person name="Frankish A."/>
            <person name="Frankland J."/>
            <person name="French L."/>
            <person name="Garner P."/>
            <person name="Garnett J."/>
            <person name="Gay L."/>
            <person name="Ghori M.R.J."/>
            <person name="Gibson R."/>
            <person name="Gilby L.M."/>
            <person name="Gillett W."/>
            <person name="Glithero R.J."/>
            <person name="Grafham D.V."/>
            <person name="Griffiths C."/>
            <person name="Griffiths-Jones S."/>
            <person name="Grocock R."/>
            <person name="Hammond S."/>
            <person name="Harrison E.S.I."/>
            <person name="Hart E."/>
            <person name="Haugen E."/>
            <person name="Heath P.D."/>
            <person name="Holmes S."/>
            <person name="Holt K."/>
            <person name="Howden P.J."/>
            <person name="Hunt A.R."/>
            <person name="Hunt S.E."/>
            <person name="Hunter G."/>
            <person name="Isherwood J."/>
            <person name="James R."/>
            <person name="Johnson C."/>
            <person name="Johnson D."/>
            <person name="Joy A."/>
            <person name="Kay M."/>
            <person name="Kershaw J.K."/>
            <person name="Kibukawa M."/>
            <person name="Kimberley A.M."/>
            <person name="King A."/>
            <person name="Knights A.J."/>
            <person name="Lad H."/>
            <person name="Laird G."/>
            <person name="Lawlor S."/>
            <person name="Leongamornlert D.A."/>
            <person name="Lloyd D.M."/>
            <person name="Loveland J."/>
            <person name="Lovell J."/>
            <person name="Lush M.J."/>
            <person name="Lyne R."/>
            <person name="Martin S."/>
            <person name="Mashreghi-Mohammadi M."/>
            <person name="Matthews L."/>
            <person name="Matthews N.S.W."/>
            <person name="McLaren S."/>
            <person name="Milne S."/>
            <person name="Mistry S."/>
            <person name="Moore M.J.F."/>
            <person name="Nickerson T."/>
            <person name="O'Dell C.N."/>
            <person name="Oliver K."/>
            <person name="Palmeiri A."/>
            <person name="Palmer S.A."/>
            <person name="Parker A."/>
            <person name="Patel D."/>
            <person name="Pearce A.V."/>
            <person name="Peck A.I."/>
            <person name="Pelan S."/>
            <person name="Phelps K."/>
            <person name="Phillimore B.J."/>
            <person name="Plumb R."/>
            <person name="Rajan J."/>
            <person name="Raymond C."/>
            <person name="Rouse G."/>
            <person name="Saenphimmachak C."/>
            <person name="Sehra H.K."/>
            <person name="Sheridan E."/>
            <person name="Shownkeen R."/>
            <person name="Sims S."/>
            <person name="Skuce C.D."/>
            <person name="Smith M."/>
            <person name="Steward C."/>
            <person name="Subramanian S."/>
            <person name="Sycamore N."/>
            <person name="Tracey A."/>
            <person name="Tromans A."/>
            <person name="Van Helmond Z."/>
            <person name="Wall M."/>
            <person name="Wallis J.M."/>
            <person name="White S."/>
            <person name="Whitehead S.L."/>
            <person name="Wilkinson J.E."/>
            <person name="Willey D.L."/>
            <person name="Williams H."/>
            <person name="Wilming L."/>
            <person name="Wray P.W."/>
            <person name="Wu Z."/>
            <person name="Coulson A."/>
            <person name="Vaudin M."/>
            <person name="Sulston J.E."/>
            <person name="Durbin R.M."/>
            <person name="Hubbard T."/>
            <person name="Wooster R."/>
            <person name="Dunham I."/>
            <person name="Carter N.P."/>
            <person name="McVean G."/>
            <person name="Ross M.T."/>
            <person name="Harrow J."/>
            <person name="Olson M.V."/>
            <person name="Beck S."/>
            <person name="Rogers J."/>
            <person name="Bentley D.R."/>
        </authorList>
    </citation>
    <scope>NUCLEOTIDE SEQUENCE [LARGE SCALE GENOMIC DNA]</scope>
</reference>
<reference key="5">
    <citation type="journal article" date="2004" name="Genome Res.">
        <title>The status, quality, and expansion of the NIH full-length cDNA project: the Mammalian Gene Collection (MGC).</title>
        <authorList>
            <consortium name="The MGC Project Team"/>
        </authorList>
    </citation>
    <scope>NUCLEOTIDE SEQUENCE [LARGE SCALE MRNA] (ISOFORM 1)</scope>
    <scope>VARIANTS THR-99 AND SER-120</scope>
    <source>
        <tissue>Skin</tissue>
    </source>
</reference>
<reference key="6">
    <citation type="journal article" date="1996" name="J. Biol. Chem.">
        <title>Site-directed mutagenesis of human lysyl hydroxylase expressed in insect cells. Identification of histidine residues and an aspartic acid residue critical for catalytic activity.</title>
        <authorList>
            <person name="Pirskanen A."/>
            <person name="Kaimio A.M."/>
            <person name="Myllylae R."/>
            <person name="Kivirikko K.I."/>
        </authorList>
    </citation>
    <scope>MUTAGENESIS OF HIS-656; ASP-658; HIS-706 AND HIS-708</scope>
    <scope>CATALYTIC ACTIVITY</scope>
    <scope>FUNCTION</scope>
    <scope>COFACTOR</scope>
</reference>
<reference key="7">
    <citation type="journal article" date="2011" name="BMC Syst. Biol.">
        <title>Initial characterization of the human central proteome.</title>
        <authorList>
            <person name="Burkard T.R."/>
            <person name="Planyavsky M."/>
            <person name="Kaupe I."/>
            <person name="Breitwieser F.P."/>
            <person name="Buerckstuemmer T."/>
            <person name="Bennett K.L."/>
            <person name="Superti-Furga G."/>
            <person name="Colinge J."/>
        </authorList>
    </citation>
    <scope>IDENTIFICATION BY MASS SPECTROMETRY [LARGE SCALE ANALYSIS]</scope>
</reference>
<reference key="8">
    <citation type="journal article" date="2014" name="J. Proteomics">
        <title>An enzyme assisted RP-RPLC approach for in-depth analysis of human liver phosphoproteome.</title>
        <authorList>
            <person name="Bian Y."/>
            <person name="Song C."/>
            <person name="Cheng K."/>
            <person name="Dong M."/>
            <person name="Wang F."/>
            <person name="Huang J."/>
            <person name="Sun D."/>
            <person name="Wang L."/>
            <person name="Ye M."/>
            <person name="Zou H."/>
        </authorList>
    </citation>
    <scope>IDENTIFICATION BY MASS SPECTROMETRY [LARGE SCALE ANALYSIS]</scope>
    <source>
        <tissue>Liver</tissue>
    </source>
</reference>
<reference key="9">
    <citation type="journal article" date="2015" name="Proteomics">
        <title>N-terminome analysis of the human mitochondrial proteome.</title>
        <authorList>
            <person name="Vaca Jacome A.S."/>
            <person name="Rabilloud T."/>
            <person name="Schaeffer-Reiss C."/>
            <person name="Rompais M."/>
            <person name="Ayoub D."/>
            <person name="Lane L."/>
            <person name="Bairoch A."/>
            <person name="Van Dorsselaer A."/>
            <person name="Carapito C."/>
        </authorList>
    </citation>
    <scope>IDENTIFICATION BY MASS SPECTROMETRY [LARGE SCALE ANALYSIS]</scope>
</reference>
<reference key="10">
    <citation type="journal article" date="1994" name="J. Clin. Invest.">
        <title>A patient with Ehlers-Danlos syndrome type VI is a compound heterozygote for mutations in the lysyl hydroxylase gene.</title>
        <authorList>
            <person name="Ha V.T."/>
            <person name="Marshall M.K."/>
            <person name="Elsas L.J."/>
            <person name="Pinnell S.R."/>
            <person name="Yeowell H.N."/>
        </authorList>
    </citation>
    <scope>VARIANTS EDSKSCL1 GLU-532 DEL AND ARG-678</scope>
</reference>
<reference key="11">
    <citation type="journal article" date="1998" name="Arch. Dermatol. Res.">
        <title>Ehlers-Danlos syndrome type VI: lysyl hydroxylase deficiency due to a novel point mutation (W612C).</title>
        <authorList>
            <person name="Brinckmann J."/>
            <person name="Acil Y."/>
            <person name="Feshchenko S."/>
            <person name="Katzer E."/>
            <person name="Brenner R."/>
            <person name="Kulozik A."/>
            <person name="Kugler S."/>
        </authorList>
    </citation>
    <scope>VARIANT EDSKSCL1 CYS-612</scope>
</reference>
<reference key="12">
    <citation type="journal article" date="2000" name="Matrix Biol.">
        <title>Deletion of cysteine 369 in lysyl hydroxylase 1 eliminates enzyme activity and causes Ehlers-Danlos syndrome type VI.</title>
        <authorList>
            <person name="Yeowell H.N."/>
            <person name="Allen J.D."/>
            <person name="Walker L.C."/>
            <person name="Overstreet M.A."/>
            <person name="Murad S."/>
            <person name="Thai S.F."/>
        </authorList>
    </citation>
    <scope>VARIANT EDSKSCL1 367-ASP--GLN-371 DEL</scope>
    <scope>MUTAGENESIS OF CYS-369</scope>
    <scope>CATALYTIC ACTIVITY</scope>
    <scope>FUNCTION</scope>
</reference>
<reference key="13">
    <citation type="journal article" date="2005" name="Am. J. Med. Genet. A">
        <title>Nevo syndrome is allelic to the kyphoscoliotic type of the Ehlers-Danlos syndrome (EDS VIA).</title>
        <authorList>
            <person name="Giunta C."/>
            <person name="Randolph A."/>
            <person name="Al-Gazali L.I."/>
            <person name="Brunner H.G."/>
            <person name="Kraenzlin M.E."/>
            <person name="Steinmann B."/>
        </authorList>
    </citation>
    <scope>INVOLVEMENT IN EDSKSCL1</scope>
</reference>
<reference key="14">
    <citation type="journal article" date="2005" name="J. Invest. Dermatol.">
        <title>A novel mutation in the lysyl hydroxylase 1 gene causes decreased lysyl hydroxylase activity in an Ehlers-Danlos VIA patient.</title>
        <authorList>
            <person name="Walker L.C."/>
            <person name="Overstreet M.A."/>
            <person name="Siddiqui A."/>
            <person name="De Paepe A."/>
            <person name="Ceylaner G."/>
            <person name="Malfait F."/>
            <person name="Symoens S."/>
            <person name="Atsawasuwan P."/>
            <person name="Yamauchi M."/>
            <person name="Ceylaner S."/>
            <person name="Bank R.A."/>
            <person name="Yeowell H.N."/>
        </authorList>
    </citation>
    <scope>VARIANT EDSKSCL1 GLY-446</scope>
    <scope>CHARACTERIZATION OF VARIANT EDSKSCL1 GLY-446</scope>
    <scope>CATALYTIC ACTIVITY</scope>
    <scope>FUNCTION</scope>
</reference>
<reference key="15">
    <citation type="journal article" date="2005" name="Mol. Genet. Metab.">
        <title>Mutation analysis of the PLOD1 gene: an efficient multistep approach to the molecular diagnosis of the kyphoscoliotic type of Ehlers-Danlos syndrome (EDS VIA).</title>
        <authorList>
            <person name="Giunta C."/>
            <person name="Randolph A."/>
            <person name="Steinmann B."/>
        </authorList>
    </citation>
    <scope>VARIANTS EDSKSCL1 THR-667 AND ARG-706</scope>
</reference>
<reference key="16">
    <citation type="journal article" date="2006" name="Science">
        <title>The consensus coding sequences of human breast and colorectal cancers.</title>
        <authorList>
            <person name="Sjoeblom T."/>
            <person name="Jones S."/>
            <person name="Wood L.D."/>
            <person name="Parsons D.W."/>
            <person name="Lin J."/>
            <person name="Barber T.D."/>
            <person name="Mandelker D."/>
            <person name="Leary R.J."/>
            <person name="Ptak J."/>
            <person name="Silliman N."/>
            <person name="Szabo S."/>
            <person name="Buckhaults P."/>
            <person name="Farrell C."/>
            <person name="Meeh P."/>
            <person name="Markowitz S.D."/>
            <person name="Willis J."/>
            <person name="Dawson D."/>
            <person name="Willson J.K.V."/>
            <person name="Gazdar A.F."/>
            <person name="Hartigan J."/>
            <person name="Wu L."/>
            <person name="Liu C."/>
            <person name="Parmigiani G."/>
            <person name="Park B.H."/>
            <person name="Bachman K.E."/>
            <person name="Papadopoulos N."/>
            <person name="Vogelstein B."/>
            <person name="Kinzler K.W."/>
            <person name="Velculescu V.E."/>
        </authorList>
    </citation>
    <scope>VARIANT [LARGE SCALE ANALYSIS] HIS-123</scope>
</reference>